<accession>Q6PF45</accession>
<name>VIAAT_XENLA</name>
<sequence length="518" mass="57191">MATLIRSKLSNVATSVSNKSQAKVSGMFARMGFQAATDEEALGFAHCDDLDTEHRQGLQMDILKTEVPTGDAPPEGDIHYQRDGTGLPPSASKDEGLCSELSSSEKPQITAWEAGWNVTNAIQGMFVLGLPYAILHGGYLGLFLIIFAAVVCCYTGKILIACLYEENEDGETVRVRDSYVDIANACCAPRFPKLGGRVVNVAQIIELVMTCILYVVVSGNLMYNSFPNLPISQKSWSIMATAVLLPCAFLKNLKAVSKFSLLCTVAHFVINILVIAYCLSRARDWAWDKVKFYIDVKKFPISIGIIVFSYTSQIFLPSLEGNMQSPREFHCMMNWTHIAACILKGLFALVAYLTWADETKEVITDNLPSTIRAVVNLFLVSKALLSYPLPFFAAVEVLEKSLFQEGARAFFPNCYGGDGRLKSWGLTLRCALVVFTLLMAIYVPHFALLMGLTGSLTGAGLCFLLPSLFHLKLMWRQLLWHQVFFDVSIFVIGSICSVSGFVHSLEGLIEAYAYNIED</sequence>
<proteinExistence type="evidence at transcript level"/>
<feature type="chain" id="PRO_0000341535" description="Vesicular inhibitory amino acid transporter">
    <location>
        <begin position="1"/>
        <end position="518"/>
    </location>
</feature>
<feature type="topological domain" description="Cytoplasmic" evidence="1">
    <location>
        <begin position="1"/>
        <end position="125"/>
    </location>
</feature>
<feature type="transmembrane region" description="Helical" evidence="4">
    <location>
        <begin position="126"/>
        <end position="146"/>
    </location>
</feature>
<feature type="topological domain" description="Lumenal, vesicle" evidence="1">
    <location>
        <begin position="147"/>
        <end position="197"/>
    </location>
</feature>
<feature type="transmembrane region" description="Helical" evidence="4">
    <location>
        <begin position="198"/>
        <end position="218"/>
    </location>
</feature>
<feature type="topological domain" description="Cytoplasmic" evidence="1">
    <location>
        <begin position="219"/>
        <end position="258"/>
    </location>
</feature>
<feature type="transmembrane region" description="Helical" evidence="4">
    <location>
        <begin position="259"/>
        <end position="279"/>
    </location>
</feature>
<feature type="topological domain" description="Lumenal, vesicle" evidence="1">
    <location>
        <begin position="280"/>
        <end position="298"/>
    </location>
</feature>
<feature type="transmembrane region" description="Helical" evidence="4">
    <location>
        <begin position="299"/>
        <end position="319"/>
    </location>
</feature>
<feature type="topological domain" description="Cytoplasmic" evidence="1">
    <location>
        <begin position="320"/>
        <end position="334"/>
    </location>
</feature>
<feature type="transmembrane region" description="Helical" evidence="4">
    <location>
        <begin position="335"/>
        <end position="355"/>
    </location>
</feature>
<feature type="topological domain" description="Lumenal, vesicle" evidence="1">
    <location>
        <begin position="356"/>
        <end position="376"/>
    </location>
</feature>
<feature type="transmembrane region" description="Helical" evidence="4">
    <location>
        <begin position="377"/>
        <end position="397"/>
    </location>
</feature>
<feature type="topological domain" description="Cytoplasmic" evidence="1">
    <location>
        <begin position="398"/>
        <end position="431"/>
    </location>
</feature>
<feature type="transmembrane region" description="Helical" evidence="4">
    <location>
        <begin position="432"/>
        <end position="452"/>
    </location>
</feature>
<feature type="topological domain" description="Lumenal, vesicle" evidence="1">
    <location>
        <begin position="453"/>
        <end position="454"/>
    </location>
</feature>
<feature type="transmembrane region" description="Helical" evidence="4">
    <location>
        <begin position="455"/>
        <end position="475"/>
    </location>
</feature>
<feature type="topological domain" description="Cytoplasmic" evidence="1">
    <location>
        <begin position="476"/>
        <end position="482"/>
    </location>
</feature>
<feature type="transmembrane region" description="Helical" evidence="4">
    <location>
        <begin position="483"/>
        <end position="503"/>
    </location>
</feature>
<feature type="topological domain" description="Lumenal, vesicle" evidence="1">
    <location>
        <begin position="504"/>
        <end position="518"/>
    </location>
</feature>
<organism>
    <name type="scientific">Xenopus laevis</name>
    <name type="common">African clawed frog</name>
    <dbReference type="NCBI Taxonomy" id="8355"/>
    <lineage>
        <taxon>Eukaryota</taxon>
        <taxon>Metazoa</taxon>
        <taxon>Chordata</taxon>
        <taxon>Craniata</taxon>
        <taxon>Vertebrata</taxon>
        <taxon>Euteleostomi</taxon>
        <taxon>Amphibia</taxon>
        <taxon>Batrachia</taxon>
        <taxon>Anura</taxon>
        <taxon>Pipoidea</taxon>
        <taxon>Pipidae</taxon>
        <taxon>Xenopodinae</taxon>
        <taxon>Xenopus</taxon>
        <taxon>Xenopus</taxon>
    </lineage>
</organism>
<protein>
    <recommendedName>
        <fullName evidence="3">Vesicular inhibitory amino acid transporter</fullName>
    </recommendedName>
    <alternativeName>
        <fullName>GABA and glycine transporter</fullName>
    </alternativeName>
    <alternativeName>
        <fullName>Solute carrier family 32 member 1</fullName>
    </alternativeName>
    <alternativeName>
        <fullName>Vesicular GABA transporter</fullName>
        <shortName>xVIAAT</shortName>
    </alternativeName>
</protein>
<dbReference type="EMBL" id="BC057733">
    <property type="protein sequence ID" value="AAH57733.1"/>
    <property type="molecule type" value="mRNA"/>
</dbReference>
<dbReference type="RefSeq" id="NP_001079961.1">
    <property type="nucleotide sequence ID" value="NM_001086492.1"/>
</dbReference>
<dbReference type="SMR" id="Q6PF45"/>
<dbReference type="DNASU" id="379652"/>
<dbReference type="GeneID" id="379652"/>
<dbReference type="KEGG" id="xla:379652"/>
<dbReference type="AGR" id="Xenbase:XB-GENE-865905"/>
<dbReference type="CTD" id="379652"/>
<dbReference type="Xenbase" id="XB-GENE-865905">
    <property type="gene designation" value="slc32a1.S"/>
</dbReference>
<dbReference type="OMA" id="MKWTHIA"/>
<dbReference type="OrthoDB" id="6021076at2759"/>
<dbReference type="Proteomes" id="UP000186698">
    <property type="component" value="Chromosome 9_10S"/>
</dbReference>
<dbReference type="Bgee" id="379652">
    <property type="expression patterns" value="Expressed in brain and 2 other cell types or tissues"/>
</dbReference>
<dbReference type="GO" id="GO:0042995">
    <property type="term" value="C:cell projection"/>
    <property type="evidence" value="ECO:0007669"/>
    <property type="project" value="UniProtKB-KW"/>
</dbReference>
<dbReference type="GO" id="GO:0030659">
    <property type="term" value="C:cytoplasmic vesicle membrane"/>
    <property type="evidence" value="ECO:0007669"/>
    <property type="project" value="UniProtKB-SubCell"/>
</dbReference>
<dbReference type="GO" id="GO:0098793">
    <property type="term" value="C:presynapse"/>
    <property type="evidence" value="ECO:0000250"/>
    <property type="project" value="UniProtKB"/>
</dbReference>
<dbReference type="GO" id="GO:0008021">
    <property type="term" value="C:synaptic vesicle"/>
    <property type="evidence" value="ECO:0000250"/>
    <property type="project" value="UniProtKB"/>
</dbReference>
<dbReference type="GO" id="GO:0005774">
    <property type="term" value="C:vacuolar membrane"/>
    <property type="evidence" value="ECO:0000318"/>
    <property type="project" value="GO_Central"/>
</dbReference>
<dbReference type="GO" id="GO:0015185">
    <property type="term" value="F:gamma-aminobutyric acid transmembrane transporter activity"/>
    <property type="evidence" value="ECO:0000250"/>
    <property type="project" value="UniProtKB"/>
</dbReference>
<dbReference type="GO" id="GO:0140800">
    <property type="term" value="F:gamma-aminobutyric acid:proton antiporter activity"/>
    <property type="evidence" value="ECO:0000250"/>
    <property type="project" value="UniProtKB"/>
</dbReference>
<dbReference type="GO" id="GO:0015187">
    <property type="term" value="F:glycine transmembrane transporter activity"/>
    <property type="evidence" value="ECO:0000250"/>
    <property type="project" value="UniProtKB"/>
</dbReference>
<dbReference type="GO" id="GO:0140799">
    <property type="term" value="F:glycine:proton antiporter activity"/>
    <property type="evidence" value="ECO:0000250"/>
    <property type="project" value="UniProtKB"/>
</dbReference>
<dbReference type="GO" id="GO:0015179">
    <property type="term" value="F:L-amino acid transmembrane transporter activity"/>
    <property type="evidence" value="ECO:0000318"/>
    <property type="project" value="GO_Central"/>
</dbReference>
<dbReference type="GO" id="GO:0003333">
    <property type="term" value="P:amino acid transmembrane transport"/>
    <property type="evidence" value="ECO:0000318"/>
    <property type="project" value="GO_Central"/>
</dbReference>
<dbReference type="GO" id="GO:0001762">
    <property type="term" value="P:beta-alanine transport"/>
    <property type="evidence" value="ECO:0000250"/>
    <property type="project" value="UniProtKB"/>
</dbReference>
<dbReference type="GO" id="GO:0051939">
    <property type="term" value="P:gamma-aminobutyric acid import"/>
    <property type="evidence" value="ECO:0000250"/>
    <property type="project" value="UniProtKB"/>
</dbReference>
<dbReference type="GO" id="GO:0015812">
    <property type="term" value="P:gamma-aminobutyric acid transport"/>
    <property type="evidence" value="ECO:0000250"/>
    <property type="project" value="UniProtKB"/>
</dbReference>
<dbReference type="GO" id="GO:0015816">
    <property type="term" value="P:glycine transport"/>
    <property type="evidence" value="ECO:0000250"/>
    <property type="project" value="UniProtKB"/>
</dbReference>
<dbReference type="GO" id="GO:0006836">
    <property type="term" value="P:neurotransmitter transport"/>
    <property type="evidence" value="ECO:0007669"/>
    <property type="project" value="UniProtKB-KW"/>
</dbReference>
<dbReference type="FunFam" id="1.20.1740.10:FF:000062">
    <property type="entry name" value="Vesicular inhibitory amino acid transporter"/>
    <property type="match status" value="1"/>
</dbReference>
<dbReference type="InterPro" id="IPR013057">
    <property type="entry name" value="AA_transpt_TM"/>
</dbReference>
<dbReference type="PANTHER" id="PTHR22950">
    <property type="entry name" value="AMINO ACID TRANSPORTER"/>
    <property type="match status" value="1"/>
</dbReference>
<dbReference type="PANTHER" id="PTHR22950:SF689">
    <property type="entry name" value="VESICULAR INHIBITORY AMINO ACID TRANSPORTER"/>
    <property type="match status" value="1"/>
</dbReference>
<dbReference type="Pfam" id="PF01490">
    <property type="entry name" value="Aa_trans"/>
    <property type="match status" value="1"/>
</dbReference>
<gene>
    <name evidence="3" type="primary">slc32a1</name>
    <name evidence="6" type="synonym">viaat</name>
</gene>
<keyword id="KW-0966">Cell projection</keyword>
<keyword id="KW-0968">Cytoplasmic vesicle</keyword>
<keyword id="KW-0472">Membrane</keyword>
<keyword id="KW-0532">Neurotransmitter transport</keyword>
<keyword id="KW-1185">Reference proteome</keyword>
<keyword id="KW-0770">Synapse</keyword>
<keyword id="KW-0812">Transmembrane</keyword>
<keyword id="KW-1133">Transmembrane helix</keyword>
<keyword id="KW-0813">Transport</keyword>
<reference evidence="8" key="1">
    <citation type="submission" date="2003-09" db="EMBL/GenBank/DDBJ databases">
        <authorList>
            <consortium name="NIH - Xenopus Gene Collection (XGC) project"/>
        </authorList>
    </citation>
    <scope>NUCLEOTIDE SEQUENCE [LARGE SCALE MRNA]</scope>
    <source>
        <tissue evidence="8">Tail bud</tissue>
    </source>
</reference>
<reference evidence="7" key="2">
    <citation type="journal article" date="2008" name="Gene Expr. Patterns">
        <title>Expression patterns of glycine transporters (xGlyT1, xGlyT2, and xVIAAT) in Xenopus laevis during early development.</title>
        <authorList>
            <person name="Wester M.R."/>
            <person name="Teasley D.C."/>
            <person name="Byers S.L."/>
            <person name="Saha M.S."/>
        </authorList>
    </citation>
    <scope>TISSUE SPECIFICITY</scope>
</reference>
<comment type="function">
    <text evidence="1 2">Antiporter that exchanges vesicular protons for cytosolic 4-aminobutanoate or to a lesser extend glycine, thus allowing their secretion from nerve terminals. The transport is equally dependent on the chemical and electrical components of the proton gradient (By similarity). May also transport beta-alanine (By similarity). Acidification of GABAergic synaptic vesicles is a prerequisite for 4-aminobutanoate uptake (By similarity).</text>
</comment>
<comment type="catalytic activity">
    <reaction evidence="2">
        <text>4-aminobutanoate(out) + n H(+)(in) = 4-aminobutanoate(in) + n H(+)(out)</text>
        <dbReference type="Rhea" id="RHEA:70979"/>
        <dbReference type="ChEBI" id="CHEBI:15378"/>
        <dbReference type="ChEBI" id="CHEBI:59888"/>
    </reaction>
</comment>
<comment type="catalytic activity">
    <reaction evidence="2">
        <text>glycine(out) + n H(+)(in) = glycine(in) + n H(+)(out)</text>
        <dbReference type="Rhea" id="RHEA:70983"/>
        <dbReference type="ChEBI" id="CHEBI:15378"/>
        <dbReference type="ChEBI" id="CHEBI:57305"/>
    </reaction>
</comment>
<comment type="catalytic activity">
    <reaction evidence="1">
        <text>beta-alanine(out) + n H(+)(in) = beta-alanine(in) + n H(+)(out)</text>
        <dbReference type="Rhea" id="RHEA:70987"/>
        <dbReference type="ChEBI" id="CHEBI:15378"/>
        <dbReference type="ChEBI" id="CHEBI:57966"/>
    </reaction>
</comment>
<comment type="subcellular location">
    <subcellularLocation>
        <location evidence="1">Cytoplasmic vesicle membrane</location>
        <topology evidence="4">Multi-pass membrane protein</topology>
    </subcellularLocation>
    <subcellularLocation>
        <location evidence="2">Presynapse</location>
    </subcellularLocation>
    <text evidence="1">Presents in glycine-, GABA- or GABA- and glycine-containing boutons.</text>
</comment>
<comment type="tissue specificity">
    <text evidence="5">Initially expressed in late neurula stages in the anterior spinal cord. By early tailbud stages, expression extends posteriorly along the entire developing spinal cord and appears in the hindbrain. In late tailbud embryos, expressed in the forebrain, midbrain, hindbrain, spinal cord and retina. In swimming tadpoles, expressed in an extended and more intense pattern including interneurons.</text>
</comment>
<comment type="similarity">
    <text evidence="4">Belongs to the amino acid/polyamine transporter 2 family.</text>
</comment>
<comment type="caution">
    <text evidence="1 2">Juge et al. shows that SLC32A1 is a symporter of both 4-aminobutanoate or glycine or beta-alanine with Cl(-) that operates according an electrical gradient without the need for a chemical gradient (By similarity). However Farsi et al. and Egashira et al. confirm that SLC32A1 is an antiporter that exchanges vesicular protons for cytosolic 4-aminobutanoate or glycine and exclude any coupling with chloride (By similarity).</text>
</comment>
<evidence type="ECO:0000250" key="1">
    <source>
        <dbReference type="UniProtKB" id="O35458"/>
    </source>
</evidence>
<evidence type="ECO:0000250" key="2">
    <source>
        <dbReference type="UniProtKB" id="O35633"/>
    </source>
</evidence>
<evidence type="ECO:0000250" key="3">
    <source>
        <dbReference type="UniProtKB" id="Q9H598"/>
    </source>
</evidence>
<evidence type="ECO:0000255" key="4"/>
<evidence type="ECO:0000269" key="5">
    <source>
    </source>
</evidence>
<evidence type="ECO:0000303" key="6">
    <source>
    </source>
</evidence>
<evidence type="ECO:0000305" key="7"/>
<evidence type="ECO:0000312" key="8">
    <source>
        <dbReference type="EMBL" id="AAH57733.1"/>
    </source>
</evidence>